<accession>P27902</accession>
<accession>Q9KXX4</accession>
<sequence>MADVPADLAAVWPRVLEQLLGEGRGQGVESKDEHWIRRCQPLALVADTALLAVPNEFAKGVLEGRLAPIVSETLSRECGRPIRIAITVDDTAGEPAGPAPQAPQSPPSRPQHRYEEPELPAPGQGGREEYRDRDEYEGYGRNRADQLPTARPAYPQEYQRPEPGSWPRPAQQDDYGWQQQRLGFPERDPYASPNQEPYGQEPPPPYSHENRTSYQQDYRPQPPERPSYDAQRGDYEQARGEYEQPRGDYDKPRGDYDQQRGDYDQRGPRRDLPEPPPGSGHVHRGGPVGPGPATGAPGPLAAQPAPATGPGEPTARLNPKYLFDTFVIGASNRFAHAAAVAVAEAPAKAYNPLFIYGESGLGKTHLLHAIGHYARSLYPGTRVRYVSSEEFTNEFINSIRDGKGDSFRKRYREMDILLVDDIQFLADKESTQEEFFHTFNTLHNANKQIVLSSDRPPKQLVTLEDRLRNRFEWGLITDVQPPELETRIAILRKKAVQEQLNAPPEVLEFIASRISRNIRELEGALIRVTAFASLNRQPVDLGLTEIVLKDLIPGGEDSAPEITSTAIMGATADYFGLTVEDLCGTSRGRALVTARQIAMYLCRELTDLSLPKIGALFGGRDHTTVMHADRKIRNLMAERRSIYNQVTELTNRIKNG</sequence>
<evidence type="ECO:0000255" key="1">
    <source>
        <dbReference type="HAMAP-Rule" id="MF_00377"/>
    </source>
</evidence>
<evidence type="ECO:0000256" key="2">
    <source>
        <dbReference type="SAM" id="MobiDB-lite"/>
    </source>
</evidence>
<comment type="function">
    <text evidence="1">Plays an essential role in the initiation and regulation of chromosomal replication. ATP-DnaA binds to the origin of replication (oriC) to initiate formation of the DNA replication initiation complex once per cell cycle. Binds the DnaA box (a 9 base pair repeat at the origin) and separates the double-stranded (ds)DNA. Forms a right-handed helical filament on oriC DNA; dsDNA binds to the exterior of the filament while single-stranded (ss)DNA is stabiized in the filament's interior. The ATP-DnaA-oriC complex binds and stabilizes one strand of the AT-rich DNA unwinding element (DUE), permitting loading of DNA polymerase. After initiation quickly degrades to an ADP-DnaA complex that is not apt for DNA replication. Binds acidic phospholipids.</text>
</comment>
<comment type="subunit">
    <text evidence="1">Oligomerizes as a right-handed, spiral filament on DNA at oriC.</text>
</comment>
<comment type="subcellular location">
    <subcellularLocation>
        <location evidence="1">Cytoplasm</location>
    </subcellularLocation>
</comment>
<comment type="domain">
    <text evidence="1">Domain I is involved in oligomerization and binding regulators, domain II is flexibile and of varying length in different bacteria, domain III forms the AAA+ region, while domain IV binds dsDNA.</text>
</comment>
<comment type="similarity">
    <text evidence="1">Belongs to the DnaA family.</text>
</comment>
<reference key="1">
    <citation type="journal article" date="1992" name="J. Bacteriol.">
        <title>Conserved gene arrangement in the origin region of the Streptomyces coelicolor chromosome.</title>
        <authorList>
            <person name="Calcutt M.J."/>
            <person name="Schmidt F.J."/>
        </authorList>
    </citation>
    <scope>NUCLEOTIDE SEQUENCE [GENOMIC DNA]</scope>
    <source>
        <strain>A3(2) / NRRL B-16638</strain>
    </source>
</reference>
<reference key="2">
    <citation type="journal article" date="2002" name="Nature">
        <title>Complete genome sequence of the model actinomycete Streptomyces coelicolor A3(2).</title>
        <authorList>
            <person name="Bentley S.D."/>
            <person name="Chater K.F."/>
            <person name="Cerdeno-Tarraga A.-M."/>
            <person name="Challis G.L."/>
            <person name="Thomson N.R."/>
            <person name="James K.D."/>
            <person name="Harris D.E."/>
            <person name="Quail M.A."/>
            <person name="Kieser H."/>
            <person name="Harper D."/>
            <person name="Bateman A."/>
            <person name="Brown S."/>
            <person name="Chandra G."/>
            <person name="Chen C.W."/>
            <person name="Collins M."/>
            <person name="Cronin A."/>
            <person name="Fraser A."/>
            <person name="Goble A."/>
            <person name="Hidalgo J."/>
            <person name="Hornsby T."/>
            <person name="Howarth S."/>
            <person name="Huang C.-H."/>
            <person name="Kieser T."/>
            <person name="Larke L."/>
            <person name="Murphy L.D."/>
            <person name="Oliver K."/>
            <person name="O'Neil S."/>
            <person name="Rabbinowitsch E."/>
            <person name="Rajandream M.A."/>
            <person name="Rutherford K.M."/>
            <person name="Rutter S."/>
            <person name="Seeger K."/>
            <person name="Saunders D."/>
            <person name="Sharp S."/>
            <person name="Squares R."/>
            <person name="Squares S."/>
            <person name="Taylor K."/>
            <person name="Warren T."/>
            <person name="Wietzorrek A."/>
            <person name="Woodward J.R."/>
            <person name="Barrell B.G."/>
            <person name="Parkhill J."/>
            <person name="Hopwood D.A."/>
        </authorList>
    </citation>
    <scope>NUCLEOTIDE SEQUENCE [LARGE SCALE GENOMIC DNA]</scope>
    <source>
        <strain>ATCC BAA-471 / A3(2) / M145</strain>
    </source>
</reference>
<dbReference type="EMBL" id="AF187159">
    <property type="protein sequence ID" value="AAA26734.1"/>
    <property type="molecule type" value="Genomic_DNA"/>
</dbReference>
<dbReference type="EMBL" id="AL939118">
    <property type="protein sequence ID" value="CAD55464.1"/>
    <property type="molecule type" value="Genomic_DNA"/>
</dbReference>
<dbReference type="PIR" id="A41870">
    <property type="entry name" value="A41870"/>
</dbReference>
<dbReference type="RefSeq" id="NP_733620.1">
    <property type="nucleotide sequence ID" value="NC_003888.3"/>
</dbReference>
<dbReference type="RefSeq" id="WP_011029287.1">
    <property type="nucleotide sequence ID" value="NZ_VNID01000003.1"/>
</dbReference>
<dbReference type="SMR" id="P27902"/>
<dbReference type="FunCoup" id="P27902">
    <property type="interactions" value="120"/>
</dbReference>
<dbReference type="STRING" id="100226.gene:17761506"/>
<dbReference type="PaxDb" id="100226-SCO3879"/>
<dbReference type="GeneID" id="91385163"/>
<dbReference type="KEGG" id="sco:SCO3879"/>
<dbReference type="PATRIC" id="fig|100226.15.peg.3952"/>
<dbReference type="eggNOG" id="COG0593">
    <property type="taxonomic scope" value="Bacteria"/>
</dbReference>
<dbReference type="HOGENOM" id="CLU_026910_2_0_11"/>
<dbReference type="InParanoid" id="P27902"/>
<dbReference type="OrthoDB" id="9807019at2"/>
<dbReference type="PhylomeDB" id="P27902"/>
<dbReference type="Proteomes" id="UP000001973">
    <property type="component" value="Chromosome"/>
</dbReference>
<dbReference type="GO" id="GO:0005737">
    <property type="term" value="C:cytoplasm"/>
    <property type="evidence" value="ECO:0007669"/>
    <property type="project" value="UniProtKB-SubCell"/>
</dbReference>
<dbReference type="GO" id="GO:0005886">
    <property type="term" value="C:plasma membrane"/>
    <property type="evidence" value="ECO:0000318"/>
    <property type="project" value="GO_Central"/>
</dbReference>
<dbReference type="GO" id="GO:0005524">
    <property type="term" value="F:ATP binding"/>
    <property type="evidence" value="ECO:0007669"/>
    <property type="project" value="UniProtKB-UniRule"/>
</dbReference>
<dbReference type="GO" id="GO:0016887">
    <property type="term" value="F:ATP hydrolysis activity"/>
    <property type="evidence" value="ECO:0007669"/>
    <property type="project" value="InterPro"/>
</dbReference>
<dbReference type="GO" id="GO:0003688">
    <property type="term" value="F:DNA replication origin binding"/>
    <property type="evidence" value="ECO:0000318"/>
    <property type="project" value="GO_Central"/>
</dbReference>
<dbReference type="GO" id="GO:0008289">
    <property type="term" value="F:lipid binding"/>
    <property type="evidence" value="ECO:0007669"/>
    <property type="project" value="UniProtKB-KW"/>
</dbReference>
<dbReference type="GO" id="GO:0006260">
    <property type="term" value="P:DNA replication"/>
    <property type="evidence" value="ECO:0000318"/>
    <property type="project" value="GO_Central"/>
</dbReference>
<dbReference type="GO" id="GO:0006270">
    <property type="term" value="P:DNA replication initiation"/>
    <property type="evidence" value="ECO:0000318"/>
    <property type="project" value="GO_Central"/>
</dbReference>
<dbReference type="GO" id="GO:0006275">
    <property type="term" value="P:regulation of DNA replication"/>
    <property type="evidence" value="ECO:0007669"/>
    <property type="project" value="UniProtKB-UniRule"/>
</dbReference>
<dbReference type="CDD" id="cd00009">
    <property type="entry name" value="AAA"/>
    <property type="match status" value="1"/>
</dbReference>
<dbReference type="CDD" id="cd06571">
    <property type="entry name" value="Bac_DnaA_C"/>
    <property type="match status" value="1"/>
</dbReference>
<dbReference type="FunFam" id="1.10.1750.10:FF:000002">
    <property type="entry name" value="Chromosomal replication initiator protein DnaA"/>
    <property type="match status" value="1"/>
</dbReference>
<dbReference type="FunFam" id="1.10.8.60:FF:000003">
    <property type="entry name" value="Chromosomal replication initiator protein DnaA"/>
    <property type="match status" value="1"/>
</dbReference>
<dbReference type="FunFam" id="3.30.300.180:FF:000004">
    <property type="entry name" value="Chromosomal replication initiator protein DnaA"/>
    <property type="match status" value="1"/>
</dbReference>
<dbReference type="FunFam" id="3.40.50.300:FF:000150">
    <property type="entry name" value="Chromosomal replication initiator protein DnaA"/>
    <property type="match status" value="1"/>
</dbReference>
<dbReference type="Gene3D" id="1.10.1750.10">
    <property type="match status" value="1"/>
</dbReference>
<dbReference type="Gene3D" id="1.10.8.60">
    <property type="match status" value="1"/>
</dbReference>
<dbReference type="Gene3D" id="3.30.300.180">
    <property type="match status" value="1"/>
</dbReference>
<dbReference type="Gene3D" id="3.40.50.300">
    <property type="entry name" value="P-loop containing nucleotide triphosphate hydrolases"/>
    <property type="match status" value="1"/>
</dbReference>
<dbReference type="HAMAP" id="MF_00377">
    <property type="entry name" value="DnaA_bact"/>
    <property type="match status" value="1"/>
</dbReference>
<dbReference type="InterPro" id="IPR003593">
    <property type="entry name" value="AAA+_ATPase"/>
</dbReference>
<dbReference type="InterPro" id="IPR001957">
    <property type="entry name" value="Chromosome_initiator_DnaA"/>
</dbReference>
<dbReference type="InterPro" id="IPR020591">
    <property type="entry name" value="Chromosome_initiator_DnaA-like"/>
</dbReference>
<dbReference type="InterPro" id="IPR018312">
    <property type="entry name" value="Chromosome_initiator_DnaA_CS"/>
</dbReference>
<dbReference type="InterPro" id="IPR013159">
    <property type="entry name" value="DnaA_C"/>
</dbReference>
<dbReference type="InterPro" id="IPR013317">
    <property type="entry name" value="DnaA_dom"/>
</dbReference>
<dbReference type="InterPro" id="IPR038454">
    <property type="entry name" value="DnaA_N_sf"/>
</dbReference>
<dbReference type="InterPro" id="IPR027417">
    <property type="entry name" value="P-loop_NTPase"/>
</dbReference>
<dbReference type="InterPro" id="IPR010921">
    <property type="entry name" value="Trp_repressor/repl_initiator"/>
</dbReference>
<dbReference type="NCBIfam" id="TIGR00362">
    <property type="entry name" value="DnaA"/>
    <property type="match status" value="1"/>
</dbReference>
<dbReference type="NCBIfam" id="NF010686">
    <property type="entry name" value="PRK14086.1"/>
    <property type="match status" value="1"/>
</dbReference>
<dbReference type="PANTHER" id="PTHR30050">
    <property type="entry name" value="CHROMOSOMAL REPLICATION INITIATOR PROTEIN DNAA"/>
    <property type="match status" value="1"/>
</dbReference>
<dbReference type="PANTHER" id="PTHR30050:SF2">
    <property type="entry name" value="CHROMOSOMAL REPLICATION INITIATOR PROTEIN DNAA"/>
    <property type="match status" value="1"/>
</dbReference>
<dbReference type="Pfam" id="PF00308">
    <property type="entry name" value="Bac_DnaA"/>
    <property type="match status" value="1"/>
</dbReference>
<dbReference type="Pfam" id="PF08299">
    <property type="entry name" value="Bac_DnaA_C"/>
    <property type="match status" value="1"/>
</dbReference>
<dbReference type="PRINTS" id="PR00051">
    <property type="entry name" value="DNAA"/>
</dbReference>
<dbReference type="SMART" id="SM00382">
    <property type="entry name" value="AAA"/>
    <property type="match status" value="1"/>
</dbReference>
<dbReference type="SMART" id="SM00760">
    <property type="entry name" value="Bac_DnaA_C"/>
    <property type="match status" value="1"/>
</dbReference>
<dbReference type="SUPFAM" id="SSF52540">
    <property type="entry name" value="P-loop containing nucleoside triphosphate hydrolases"/>
    <property type="match status" value="1"/>
</dbReference>
<dbReference type="SUPFAM" id="SSF48295">
    <property type="entry name" value="TrpR-like"/>
    <property type="match status" value="1"/>
</dbReference>
<dbReference type="PROSITE" id="PS01008">
    <property type="entry name" value="DNAA"/>
    <property type="match status" value="1"/>
</dbReference>
<keyword id="KW-0067">ATP-binding</keyword>
<keyword id="KW-0963">Cytoplasm</keyword>
<keyword id="KW-0235">DNA replication</keyword>
<keyword id="KW-0238">DNA-binding</keyword>
<keyword id="KW-0446">Lipid-binding</keyword>
<keyword id="KW-0547">Nucleotide-binding</keyword>
<keyword id="KW-1185">Reference proteome</keyword>
<organism>
    <name type="scientific">Streptomyces coelicolor (strain ATCC BAA-471 / A3(2) / M145)</name>
    <dbReference type="NCBI Taxonomy" id="100226"/>
    <lineage>
        <taxon>Bacteria</taxon>
        <taxon>Bacillati</taxon>
        <taxon>Actinomycetota</taxon>
        <taxon>Actinomycetes</taxon>
        <taxon>Kitasatosporales</taxon>
        <taxon>Streptomycetaceae</taxon>
        <taxon>Streptomyces</taxon>
        <taxon>Streptomyces albidoflavus group</taxon>
    </lineage>
</organism>
<name>DNAA_STRCO</name>
<feature type="chain" id="PRO_0000114271" description="Chromosomal replication initiator protein DnaA">
    <location>
        <begin position="1"/>
        <end position="656"/>
    </location>
</feature>
<feature type="region of interest" description="Domain I, interacts with DnaA modulators" evidence="1">
    <location>
        <begin position="1"/>
        <end position="100"/>
    </location>
</feature>
<feature type="region of interest" description="Disordered" evidence="2">
    <location>
        <begin position="91"/>
        <end position="313"/>
    </location>
</feature>
<feature type="region of interest" description="Domain II" evidence="1">
    <location>
        <begin position="101"/>
        <end position="315"/>
    </location>
</feature>
<feature type="region of interest" description="Domain III, AAA+ region" evidence="1">
    <location>
        <begin position="316"/>
        <end position="532"/>
    </location>
</feature>
<feature type="region of interest" description="Domain IV, binds dsDNA" evidence="1">
    <location>
        <begin position="533"/>
        <end position="656"/>
    </location>
</feature>
<feature type="compositionally biased region" description="Pro residues" evidence="2">
    <location>
        <begin position="97"/>
        <end position="109"/>
    </location>
</feature>
<feature type="compositionally biased region" description="Basic and acidic residues" evidence="2">
    <location>
        <begin position="126"/>
        <end position="144"/>
    </location>
</feature>
<feature type="compositionally biased region" description="Basic and acidic residues" evidence="2">
    <location>
        <begin position="231"/>
        <end position="273"/>
    </location>
</feature>
<feature type="compositionally biased region" description="Low complexity" evidence="2">
    <location>
        <begin position="291"/>
        <end position="313"/>
    </location>
</feature>
<feature type="binding site" evidence="1">
    <location>
        <position position="360"/>
    </location>
    <ligand>
        <name>ATP</name>
        <dbReference type="ChEBI" id="CHEBI:30616"/>
    </ligand>
</feature>
<feature type="binding site" evidence="1">
    <location>
        <position position="362"/>
    </location>
    <ligand>
        <name>ATP</name>
        <dbReference type="ChEBI" id="CHEBI:30616"/>
    </ligand>
</feature>
<feature type="binding site" evidence="1">
    <location>
        <position position="363"/>
    </location>
    <ligand>
        <name>ATP</name>
        <dbReference type="ChEBI" id="CHEBI:30616"/>
    </ligand>
</feature>
<feature type="binding site" evidence="1">
    <location>
        <position position="364"/>
    </location>
    <ligand>
        <name>ATP</name>
        <dbReference type="ChEBI" id="CHEBI:30616"/>
    </ligand>
</feature>
<gene>
    <name evidence="1" type="primary">dnaA</name>
    <name type="ordered locus">SCO3879</name>
    <name type="ORF">SCH18.16c</name>
</gene>
<proteinExistence type="inferred from homology"/>
<protein>
    <recommendedName>
        <fullName evidence="1">Chromosomal replication initiator protein DnaA</fullName>
    </recommendedName>
</protein>